<feature type="chain" id="PRO_0000133210" description="Regulatory protein E2">
    <location>
        <begin position="1"/>
        <end position="378"/>
    </location>
</feature>
<feature type="region of interest" description="Transactivation domain" evidence="1">
    <location>
        <begin position="1"/>
        <end position="200"/>
    </location>
</feature>
<feature type="region of interest" description="Disordered" evidence="2">
    <location>
        <begin position="221"/>
        <end position="281"/>
    </location>
</feature>
<feature type="region of interest" description="DNA-binding domain" evidence="1">
    <location>
        <begin position="297"/>
        <end position="378"/>
    </location>
</feature>
<feature type="compositionally biased region" description="Low complexity" evidence="2">
    <location>
        <begin position="221"/>
        <end position="230"/>
    </location>
</feature>
<feature type="compositionally biased region" description="Low complexity" evidence="2">
    <location>
        <begin position="268"/>
        <end position="278"/>
    </location>
</feature>
<feature type="cross-link" description="Glycyl lysine isopeptide (Lys-Gly) (interchain with G-Cter in SUMO)" evidence="1">
    <location>
        <position position="304"/>
    </location>
</feature>
<name>VE2_HPV30</name>
<sequence length="378" mass="43626">METLCQRLDACQEKILDCFENDSKKIEDHIVYWKAVRHENVVLYKARQNNITKLRHQVVPCLQVCKAKACVAIEIQMALESLYKTEYKVEEWTLKDVCENMWHTAPKQCFKKSGKRIEVWFDGKKDNRTEYVVWQWVYYCGDNGWTKVPSVVDYKGIYYVHDGNKVYYTDFNDEAVKYGYKGTWEVHMGNESIYCPDSVSSTLRSNVSPVETVVEYNTYNTYQTPTTSTPVGANEAASSARPGKRPRTTEPDSTDTTRQSAARESHANRVNTNNTNNRQCLGGATCYNTEVDGGYKTTPVVHLKGEPNRLKCLRYRCQKHKHLFVNISSTYHWTNTHTEYSYITVVYKDETQRANFLNVVKIPPSIKIVMGHMTGVDM</sequence>
<comment type="function">
    <text evidence="1">Plays a role in the initiation of viral DNA replication. A dimer of E2 interacts with a dimer of E1 in order to improve specificity of E1 DNA binding activity. Once the complex recognizes and binds DNA at specific sites, the E2 dimer is removed from DNA. E2 also regulates viral transcription through binding to the E2RE response element (5'-ACCNNNNNNGGT-3') present in multiple copies in the regulatory regions of the viral genome. Activates or represses transcription depending on E2RE's position with regards to proximal promoter elements including the TATA-box. Repression occurs by sterically hindering the assembly of the transcription initiation complex.</text>
</comment>
<comment type="subunit">
    <text evidence="1">Binds DNA as homodimer. Interacts with protein E1; this interaction greatly increases E1 DNA-binding activity. Interacts with protein L1; this interaction enhances E2-dependent replication and transcription activation. Interacts with protein L2; this interaction inhibits E2 transcriptional activity but not DNA replication function E2. Interacts with protein E7; this interaction inhibits E7 oncogenic activity. Interacts with host TAF1; this interaction modulates E2-dependent transcriptional regulation. Interacts with host BRD4; this interaction mediates E2 transcriptional activation function. Additionally, the interaction with host BRD4 on mitotic chromosomes mediates tethering of the viral genome. Interacts with host TOPBP1; this interaction is required for optimal viral DNA replication.</text>
</comment>
<comment type="subcellular location">
    <subcellularLocation>
        <location evidence="1">Host nucleus</location>
    </subcellularLocation>
</comment>
<comment type="PTM">
    <text evidence="1">Phosphorylated.</text>
</comment>
<comment type="PTM">
    <text evidence="1">Sumoylation plays a regulatory role in E2 transcriptional activity.</text>
</comment>
<comment type="similarity">
    <text evidence="1">Belongs to the papillomaviridae E2 protein family.</text>
</comment>
<dbReference type="EMBL" id="X74474">
    <property type="protein sequence ID" value="CAA52546.1"/>
    <property type="molecule type" value="Genomic_DNA"/>
</dbReference>
<dbReference type="PIR" id="S36506">
    <property type="entry name" value="S36506"/>
</dbReference>
<dbReference type="RefSeq" id="YP_009508157.1">
    <property type="nucleotide sequence ID" value="NC_038889.1"/>
</dbReference>
<dbReference type="SMR" id="P36790"/>
<dbReference type="GeneID" id="37619468"/>
<dbReference type="OrthoDB" id="15886at10239"/>
<dbReference type="Proteomes" id="UP000009155">
    <property type="component" value="Genome"/>
</dbReference>
<dbReference type="GO" id="GO:0042025">
    <property type="term" value="C:host cell nucleus"/>
    <property type="evidence" value="ECO:0007669"/>
    <property type="project" value="UniProtKB-SubCell"/>
</dbReference>
<dbReference type="GO" id="GO:0003677">
    <property type="term" value="F:DNA binding"/>
    <property type="evidence" value="ECO:0007669"/>
    <property type="project" value="UniProtKB-UniRule"/>
</dbReference>
<dbReference type="GO" id="GO:0003700">
    <property type="term" value="F:DNA-binding transcription factor activity"/>
    <property type="evidence" value="ECO:0007669"/>
    <property type="project" value="UniProtKB-UniRule"/>
</dbReference>
<dbReference type="GO" id="GO:0000166">
    <property type="term" value="F:nucleotide binding"/>
    <property type="evidence" value="ECO:0007669"/>
    <property type="project" value="UniProtKB-UniRule"/>
</dbReference>
<dbReference type="GO" id="GO:0006260">
    <property type="term" value="P:DNA replication"/>
    <property type="evidence" value="ECO:0007669"/>
    <property type="project" value="UniProtKB-KW"/>
</dbReference>
<dbReference type="GO" id="GO:0006351">
    <property type="term" value="P:DNA-templated transcription"/>
    <property type="evidence" value="ECO:0007669"/>
    <property type="project" value="UniProtKB-UniRule"/>
</dbReference>
<dbReference type="GO" id="GO:0006275">
    <property type="term" value="P:regulation of DNA replication"/>
    <property type="evidence" value="ECO:0007669"/>
    <property type="project" value="UniProtKB-UniRule"/>
</dbReference>
<dbReference type="GO" id="GO:0039693">
    <property type="term" value="P:viral DNA genome replication"/>
    <property type="evidence" value="ECO:0007669"/>
    <property type="project" value="UniProtKB-UniRule"/>
</dbReference>
<dbReference type="Gene3D" id="3.30.70.330">
    <property type="match status" value="1"/>
</dbReference>
<dbReference type="Gene3D" id="1.10.287.30">
    <property type="entry name" value="E2 (early) protein, N terminal domain, subdomain 1"/>
    <property type="match status" value="1"/>
</dbReference>
<dbReference type="Gene3D" id="2.170.200.10">
    <property type="entry name" value="Papillomavirus E2 early protein domain"/>
    <property type="match status" value="1"/>
</dbReference>
<dbReference type="HAMAP" id="MF_04001">
    <property type="entry name" value="PPV_E2"/>
    <property type="match status" value="1"/>
</dbReference>
<dbReference type="InterPro" id="IPR035975">
    <property type="entry name" value="E2/EBNA1_C_sf"/>
</dbReference>
<dbReference type="InterPro" id="IPR012677">
    <property type="entry name" value="Nucleotide-bd_a/b_plait_sf"/>
</dbReference>
<dbReference type="InterPro" id="IPR000427">
    <property type="entry name" value="Papillomavirus_E2_C"/>
</dbReference>
<dbReference type="InterPro" id="IPR001866">
    <property type="entry name" value="PPV_E2_N"/>
</dbReference>
<dbReference type="InterPro" id="IPR033668">
    <property type="entry name" value="Reg_prot_E2"/>
</dbReference>
<dbReference type="InterPro" id="IPR036050">
    <property type="entry name" value="Regulatory_protein_E2_N"/>
</dbReference>
<dbReference type="InterPro" id="IPR042503">
    <property type="entry name" value="Regulatory_protein_E2_N_1"/>
</dbReference>
<dbReference type="InterPro" id="IPR042504">
    <property type="entry name" value="Regulatory_protein_E2_N_2"/>
</dbReference>
<dbReference type="Pfam" id="PF00511">
    <property type="entry name" value="PPV_E2_C"/>
    <property type="match status" value="1"/>
</dbReference>
<dbReference type="Pfam" id="PF00508">
    <property type="entry name" value="PPV_E2_N"/>
    <property type="match status" value="1"/>
</dbReference>
<dbReference type="SUPFAM" id="SSF51332">
    <property type="entry name" value="E2 regulatory, transactivation domain"/>
    <property type="match status" value="1"/>
</dbReference>
<dbReference type="SUPFAM" id="SSF54957">
    <property type="entry name" value="Viral DNA-binding domain"/>
    <property type="match status" value="1"/>
</dbReference>
<accession>P36790</accession>
<reference key="1">
    <citation type="journal article" date="1994" name="Curr. Top. Microbiol. Immunol.">
        <title>Primer-directed sequencing of human papillomavirus types.</title>
        <authorList>
            <person name="Delius H."/>
            <person name="Hofmann B."/>
        </authorList>
    </citation>
    <scope>NUCLEOTIDE SEQUENCE [GENOMIC DNA]</scope>
</reference>
<protein>
    <recommendedName>
        <fullName evidence="1">Regulatory protein E2</fullName>
    </recommendedName>
</protein>
<organismHost>
    <name type="scientific">Homo sapiens</name>
    <name type="common">Human</name>
    <dbReference type="NCBI Taxonomy" id="9606"/>
</organismHost>
<organism>
    <name type="scientific">Human papillomavirus 30</name>
    <dbReference type="NCBI Taxonomy" id="10611"/>
    <lineage>
        <taxon>Viruses</taxon>
        <taxon>Monodnaviria</taxon>
        <taxon>Shotokuvirae</taxon>
        <taxon>Cossaviricota</taxon>
        <taxon>Papovaviricetes</taxon>
        <taxon>Zurhausenvirales</taxon>
        <taxon>Papillomaviridae</taxon>
        <taxon>Firstpapillomavirinae</taxon>
        <taxon>Alphapapillomavirus</taxon>
        <taxon>Alphapapillomavirus 6</taxon>
    </lineage>
</organism>
<evidence type="ECO:0000255" key="1">
    <source>
        <dbReference type="HAMAP-Rule" id="MF_04001"/>
    </source>
</evidence>
<evidence type="ECO:0000256" key="2">
    <source>
        <dbReference type="SAM" id="MobiDB-lite"/>
    </source>
</evidence>
<proteinExistence type="inferred from homology"/>
<gene>
    <name evidence="1" type="primary">E2</name>
</gene>
<keyword id="KW-0010">Activator</keyword>
<keyword id="KW-0235">DNA replication</keyword>
<keyword id="KW-0238">DNA-binding</keyword>
<keyword id="KW-0244">Early protein</keyword>
<keyword id="KW-1048">Host nucleus</keyword>
<keyword id="KW-1017">Isopeptide bond</keyword>
<keyword id="KW-0597">Phosphoprotein</keyword>
<keyword id="KW-1185">Reference proteome</keyword>
<keyword id="KW-0678">Repressor</keyword>
<keyword id="KW-0804">Transcription</keyword>
<keyword id="KW-0805">Transcription regulation</keyword>
<keyword id="KW-0832">Ubl conjugation</keyword>